<sequence>MNSTWDGNQSSHPFCLLALGYLETVRFCLLEVLIIVFLTVLIISGNIIVIFVFHCAPLLNHHSTSYFIQTMAYADLLVGVSCLVPSLSLLYYPLPIEEAMTCQVFGFVVSVLKSISMASLACISIDRYIAITKPLTYNTLVTPWRLRLCIFLIWLYSTLVFLPSFFHWGKPGYHGDVFQWCAESWHTNSYFTLFIVMMLYAPAALIVCFTYFNIFRICQQHTKEISERQARFSSQNGETGEPQTCPDKRYAMVLFRITSVFYVLWLPYIIYFLLESSTGCSSRLASFLTTWLAISNSFCNCIIYSLSNSVFQRGLKGLSGSLCTSCASHTTAKDPYTVRCKGPPNGSHI</sequence>
<gene>
    <name type="primary">Gpr21</name>
</gene>
<name>GPR21_MOUSE</name>
<organism>
    <name type="scientific">Mus musculus</name>
    <name type="common">Mouse</name>
    <dbReference type="NCBI Taxonomy" id="10090"/>
    <lineage>
        <taxon>Eukaryota</taxon>
        <taxon>Metazoa</taxon>
        <taxon>Chordata</taxon>
        <taxon>Craniata</taxon>
        <taxon>Vertebrata</taxon>
        <taxon>Euteleostomi</taxon>
        <taxon>Mammalia</taxon>
        <taxon>Eutheria</taxon>
        <taxon>Euarchontoglires</taxon>
        <taxon>Glires</taxon>
        <taxon>Rodentia</taxon>
        <taxon>Myomorpha</taxon>
        <taxon>Muroidea</taxon>
        <taxon>Muridae</taxon>
        <taxon>Murinae</taxon>
        <taxon>Mus</taxon>
        <taxon>Mus</taxon>
    </lineage>
</organism>
<keyword id="KW-1003">Cell membrane</keyword>
<keyword id="KW-0297">G-protein coupled receptor</keyword>
<keyword id="KW-0325">Glycoprotein</keyword>
<keyword id="KW-0472">Membrane</keyword>
<keyword id="KW-0675">Receptor</keyword>
<keyword id="KW-1185">Reference proteome</keyword>
<keyword id="KW-0807">Transducer</keyword>
<keyword id="KW-0812">Transmembrane</keyword>
<keyword id="KW-1133">Transmembrane helix</keyword>
<feature type="chain" id="PRO_0000303234" description="Probable G-protein coupled receptor 21">
    <location>
        <begin position="1"/>
        <end position="349"/>
    </location>
</feature>
<feature type="topological domain" description="Extracellular" evidence="1">
    <location>
        <begin position="1"/>
        <end position="32"/>
    </location>
</feature>
<feature type="transmembrane region" description="Helical; Name=1" evidence="1">
    <location>
        <begin position="33"/>
        <end position="53"/>
    </location>
</feature>
<feature type="topological domain" description="Cytoplasmic" evidence="1">
    <location>
        <begin position="54"/>
        <end position="75"/>
    </location>
</feature>
<feature type="transmembrane region" description="Helical; Name=2" evidence="1">
    <location>
        <begin position="76"/>
        <end position="96"/>
    </location>
</feature>
<feature type="topological domain" description="Extracellular" evidence="1">
    <location>
        <begin position="97"/>
        <end position="104"/>
    </location>
</feature>
<feature type="transmembrane region" description="Helical; Name=3" evidence="1">
    <location>
        <begin position="105"/>
        <end position="125"/>
    </location>
</feature>
<feature type="topological domain" description="Cytoplasmic" evidence="1">
    <location>
        <begin position="126"/>
        <end position="147"/>
    </location>
</feature>
<feature type="transmembrane region" description="Helical; Name=4" evidence="1">
    <location>
        <begin position="148"/>
        <end position="168"/>
    </location>
</feature>
<feature type="topological domain" description="Extracellular" evidence="1">
    <location>
        <begin position="169"/>
        <end position="191"/>
    </location>
</feature>
<feature type="transmembrane region" description="Helical; Name=5" evidence="1">
    <location>
        <begin position="192"/>
        <end position="212"/>
    </location>
</feature>
<feature type="topological domain" description="Cytoplasmic" evidence="1">
    <location>
        <begin position="213"/>
        <end position="252"/>
    </location>
</feature>
<feature type="transmembrane region" description="Helical; Name=6" evidence="1">
    <location>
        <begin position="253"/>
        <end position="273"/>
    </location>
</feature>
<feature type="topological domain" description="Extracellular" evidence="1">
    <location>
        <begin position="274"/>
        <end position="283"/>
    </location>
</feature>
<feature type="transmembrane region" description="Helical; Name=7" evidence="1">
    <location>
        <begin position="284"/>
        <end position="304"/>
    </location>
</feature>
<feature type="topological domain" description="Cytoplasmic" evidence="1">
    <location>
        <begin position="305"/>
        <end position="349"/>
    </location>
</feature>
<feature type="glycosylation site" description="N-linked (GlcNAc...) asparagine" evidence="1">
    <location>
        <position position="2"/>
    </location>
</feature>
<feature type="glycosylation site" description="N-linked (GlcNAc...) asparagine" evidence="1">
    <location>
        <position position="8"/>
    </location>
</feature>
<reference key="1">
    <citation type="journal article" date="2005" name="Science">
        <title>The transcriptional landscape of the mammalian genome.</title>
        <authorList>
            <person name="Carninci P."/>
            <person name="Kasukawa T."/>
            <person name="Katayama S."/>
            <person name="Gough J."/>
            <person name="Frith M.C."/>
            <person name="Maeda N."/>
            <person name="Oyama R."/>
            <person name="Ravasi T."/>
            <person name="Lenhard B."/>
            <person name="Wells C."/>
            <person name="Kodzius R."/>
            <person name="Shimokawa K."/>
            <person name="Bajic V.B."/>
            <person name="Brenner S.E."/>
            <person name="Batalov S."/>
            <person name="Forrest A.R."/>
            <person name="Zavolan M."/>
            <person name="Davis M.J."/>
            <person name="Wilming L.G."/>
            <person name="Aidinis V."/>
            <person name="Allen J.E."/>
            <person name="Ambesi-Impiombato A."/>
            <person name="Apweiler R."/>
            <person name="Aturaliya R.N."/>
            <person name="Bailey T.L."/>
            <person name="Bansal M."/>
            <person name="Baxter L."/>
            <person name="Beisel K.W."/>
            <person name="Bersano T."/>
            <person name="Bono H."/>
            <person name="Chalk A.M."/>
            <person name="Chiu K.P."/>
            <person name="Choudhary V."/>
            <person name="Christoffels A."/>
            <person name="Clutterbuck D.R."/>
            <person name="Crowe M.L."/>
            <person name="Dalla E."/>
            <person name="Dalrymple B.P."/>
            <person name="de Bono B."/>
            <person name="Della Gatta G."/>
            <person name="di Bernardo D."/>
            <person name="Down T."/>
            <person name="Engstrom P."/>
            <person name="Fagiolini M."/>
            <person name="Faulkner G."/>
            <person name="Fletcher C.F."/>
            <person name="Fukushima T."/>
            <person name="Furuno M."/>
            <person name="Futaki S."/>
            <person name="Gariboldi M."/>
            <person name="Georgii-Hemming P."/>
            <person name="Gingeras T.R."/>
            <person name="Gojobori T."/>
            <person name="Green R.E."/>
            <person name="Gustincich S."/>
            <person name="Harbers M."/>
            <person name="Hayashi Y."/>
            <person name="Hensch T.K."/>
            <person name="Hirokawa N."/>
            <person name="Hill D."/>
            <person name="Huminiecki L."/>
            <person name="Iacono M."/>
            <person name="Ikeo K."/>
            <person name="Iwama A."/>
            <person name="Ishikawa T."/>
            <person name="Jakt M."/>
            <person name="Kanapin A."/>
            <person name="Katoh M."/>
            <person name="Kawasawa Y."/>
            <person name="Kelso J."/>
            <person name="Kitamura H."/>
            <person name="Kitano H."/>
            <person name="Kollias G."/>
            <person name="Krishnan S.P."/>
            <person name="Kruger A."/>
            <person name="Kummerfeld S.K."/>
            <person name="Kurochkin I.V."/>
            <person name="Lareau L.F."/>
            <person name="Lazarevic D."/>
            <person name="Lipovich L."/>
            <person name="Liu J."/>
            <person name="Liuni S."/>
            <person name="McWilliam S."/>
            <person name="Madan Babu M."/>
            <person name="Madera M."/>
            <person name="Marchionni L."/>
            <person name="Matsuda H."/>
            <person name="Matsuzawa S."/>
            <person name="Miki H."/>
            <person name="Mignone F."/>
            <person name="Miyake S."/>
            <person name="Morris K."/>
            <person name="Mottagui-Tabar S."/>
            <person name="Mulder N."/>
            <person name="Nakano N."/>
            <person name="Nakauchi H."/>
            <person name="Ng P."/>
            <person name="Nilsson R."/>
            <person name="Nishiguchi S."/>
            <person name="Nishikawa S."/>
            <person name="Nori F."/>
            <person name="Ohara O."/>
            <person name="Okazaki Y."/>
            <person name="Orlando V."/>
            <person name="Pang K.C."/>
            <person name="Pavan W.J."/>
            <person name="Pavesi G."/>
            <person name="Pesole G."/>
            <person name="Petrovsky N."/>
            <person name="Piazza S."/>
            <person name="Reed J."/>
            <person name="Reid J.F."/>
            <person name="Ring B.Z."/>
            <person name="Ringwald M."/>
            <person name="Rost B."/>
            <person name="Ruan Y."/>
            <person name="Salzberg S.L."/>
            <person name="Sandelin A."/>
            <person name="Schneider C."/>
            <person name="Schoenbach C."/>
            <person name="Sekiguchi K."/>
            <person name="Semple C.A."/>
            <person name="Seno S."/>
            <person name="Sessa L."/>
            <person name="Sheng Y."/>
            <person name="Shibata Y."/>
            <person name="Shimada H."/>
            <person name="Shimada K."/>
            <person name="Silva D."/>
            <person name="Sinclair B."/>
            <person name="Sperling S."/>
            <person name="Stupka E."/>
            <person name="Sugiura K."/>
            <person name="Sultana R."/>
            <person name="Takenaka Y."/>
            <person name="Taki K."/>
            <person name="Tammoja K."/>
            <person name="Tan S.L."/>
            <person name="Tang S."/>
            <person name="Taylor M.S."/>
            <person name="Tegner J."/>
            <person name="Teichmann S.A."/>
            <person name="Ueda H.R."/>
            <person name="van Nimwegen E."/>
            <person name="Verardo R."/>
            <person name="Wei C.L."/>
            <person name="Yagi K."/>
            <person name="Yamanishi H."/>
            <person name="Zabarovsky E."/>
            <person name="Zhu S."/>
            <person name="Zimmer A."/>
            <person name="Hide W."/>
            <person name="Bult C."/>
            <person name="Grimmond S.M."/>
            <person name="Teasdale R.D."/>
            <person name="Liu E.T."/>
            <person name="Brusic V."/>
            <person name="Quackenbush J."/>
            <person name="Wahlestedt C."/>
            <person name="Mattick J.S."/>
            <person name="Hume D.A."/>
            <person name="Kai C."/>
            <person name="Sasaki D."/>
            <person name="Tomaru Y."/>
            <person name="Fukuda S."/>
            <person name="Kanamori-Katayama M."/>
            <person name="Suzuki M."/>
            <person name="Aoki J."/>
            <person name="Arakawa T."/>
            <person name="Iida J."/>
            <person name="Imamura K."/>
            <person name="Itoh M."/>
            <person name="Kato T."/>
            <person name="Kawaji H."/>
            <person name="Kawagashira N."/>
            <person name="Kawashima T."/>
            <person name="Kojima M."/>
            <person name="Kondo S."/>
            <person name="Konno H."/>
            <person name="Nakano K."/>
            <person name="Ninomiya N."/>
            <person name="Nishio T."/>
            <person name="Okada M."/>
            <person name="Plessy C."/>
            <person name="Shibata K."/>
            <person name="Shiraki T."/>
            <person name="Suzuki S."/>
            <person name="Tagami M."/>
            <person name="Waki K."/>
            <person name="Watahiki A."/>
            <person name="Okamura-Oho Y."/>
            <person name="Suzuki H."/>
            <person name="Kawai J."/>
            <person name="Hayashizaki Y."/>
        </authorList>
    </citation>
    <scope>NUCLEOTIDE SEQUENCE [LARGE SCALE MRNA]</scope>
    <source>
        <strain>C57BL/6J</strain>
        <tissue>Cerebellum</tissue>
        <tissue>Spinal ganglion</tissue>
    </source>
</reference>
<reference key="2">
    <citation type="journal article" date="2009" name="PLoS Biol.">
        <title>Lineage-specific biology revealed by a finished genome assembly of the mouse.</title>
        <authorList>
            <person name="Church D.M."/>
            <person name="Goodstadt L."/>
            <person name="Hillier L.W."/>
            <person name="Zody M.C."/>
            <person name="Goldstein S."/>
            <person name="She X."/>
            <person name="Bult C.J."/>
            <person name="Agarwala R."/>
            <person name="Cherry J.L."/>
            <person name="DiCuccio M."/>
            <person name="Hlavina W."/>
            <person name="Kapustin Y."/>
            <person name="Meric P."/>
            <person name="Maglott D."/>
            <person name="Birtle Z."/>
            <person name="Marques A.C."/>
            <person name="Graves T."/>
            <person name="Zhou S."/>
            <person name="Teague B."/>
            <person name="Potamousis K."/>
            <person name="Churas C."/>
            <person name="Place M."/>
            <person name="Herschleb J."/>
            <person name="Runnheim R."/>
            <person name="Forrest D."/>
            <person name="Amos-Landgraf J."/>
            <person name="Schwartz D.C."/>
            <person name="Cheng Z."/>
            <person name="Lindblad-Toh K."/>
            <person name="Eichler E.E."/>
            <person name="Ponting C.P."/>
        </authorList>
    </citation>
    <scope>NUCLEOTIDE SEQUENCE [LARGE SCALE GENOMIC DNA]</scope>
    <source>
        <strain>C57BL/6J</strain>
    </source>
</reference>
<reference key="3">
    <citation type="journal article" date="2004" name="Genome Res.">
        <title>The status, quality, and expansion of the NIH full-length cDNA project: the Mammalian Gene Collection (MGC).</title>
        <authorList>
            <consortium name="The MGC Project Team"/>
        </authorList>
    </citation>
    <scope>NUCLEOTIDE SEQUENCE [LARGE SCALE MRNA]</scope>
</reference>
<reference key="4">
    <citation type="journal article" date="2003" name="Proc. Natl. Acad. Sci. U.S.A.">
        <title>The G protein-coupled receptor repertoires of human and mouse.</title>
        <authorList>
            <person name="Vassilatis D.K."/>
            <person name="Hohmann J.G."/>
            <person name="Zeng H."/>
            <person name="Li F."/>
            <person name="Ranchalis J.E."/>
            <person name="Mortrud M.T."/>
            <person name="Brown A."/>
            <person name="Rodriguez S.S."/>
            <person name="Weller J.R."/>
            <person name="Wright A.C."/>
            <person name="Bergmann J.E."/>
            <person name="Gaitanaris G.A."/>
        </authorList>
    </citation>
    <scope>NUCLEOTIDE SEQUENCE [LARGE SCALE MRNA] OF 78-219</scope>
</reference>
<proteinExistence type="evidence at transcript level"/>
<evidence type="ECO:0000255" key="1"/>
<evidence type="ECO:0000255" key="2">
    <source>
        <dbReference type="PROSITE-ProRule" id="PRU00521"/>
    </source>
</evidence>
<comment type="function">
    <text>Orphan receptor.</text>
</comment>
<comment type="subcellular location">
    <subcellularLocation>
        <location>Cell membrane</location>
        <topology>Multi-pass membrane protein</topology>
    </subcellularLocation>
</comment>
<comment type="similarity">
    <text evidence="2">Belongs to the G-protein coupled receptor 1 family.</text>
</comment>
<dbReference type="EMBL" id="AK048682">
    <property type="protein sequence ID" value="BAC33420.1"/>
    <property type="molecule type" value="mRNA"/>
</dbReference>
<dbReference type="EMBL" id="AK141999">
    <property type="protein sequence ID" value="BAE24908.1"/>
    <property type="molecule type" value="mRNA"/>
</dbReference>
<dbReference type="EMBL" id="AL953890">
    <property type="status" value="NOT_ANNOTATED_CDS"/>
    <property type="molecule type" value="Genomic_DNA"/>
</dbReference>
<dbReference type="EMBL" id="BC112377">
    <property type="protein sequence ID" value="AAI12378.1"/>
    <property type="molecule type" value="mRNA"/>
</dbReference>
<dbReference type="EMBL" id="AY255598">
    <property type="protein sequence ID" value="AAO85110.1"/>
    <property type="molecule type" value="mRNA"/>
</dbReference>
<dbReference type="CCDS" id="CCDS16004.1"/>
<dbReference type="RefSeq" id="NP_796357.1">
    <property type="nucleotide sequence ID" value="NM_177383.4"/>
</dbReference>
<dbReference type="SMR" id="Q8BX79"/>
<dbReference type="FunCoup" id="Q8BX79">
    <property type="interactions" value="239"/>
</dbReference>
<dbReference type="STRING" id="10090.ENSMUSP00000066449"/>
<dbReference type="GlyCosmos" id="Q8BX79">
    <property type="glycosylation" value="2 sites, No reported glycans"/>
</dbReference>
<dbReference type="GlyGen" id="Q8BX79">
    <property type="glycosylation" value="2 sites"/>
</dbReference>
<dbReference type="PhosphoSitePlus" id="Q8BX79"/>
<dbReference type="PaxDb" id="10090-ENSMUSP00000066449"/>
<dbReference type="Antibodypedia" id="30412">
    <property type="antibodies" value="80 antibodies from 15 providers"/>
</dbReference>
<dbReference type="DNASU" id="338346"/>
<dbReference type="Ensembl" id="ENSMUST00000065441.7">
    <property type="protein sequence ID" value="ENSMUSP00000066449.7"/>
    <property type="gene ID" value="ENSMUSG00000053164.7"/>
</dbReference>
<dbReference type="GeneID" id="338346"/>
<dbReference type="KEGG" id="mmu:338346"/>
<dbReference type="UCSC" id="uc008jna.1">
    <property type="organism name" value="mouse"/>
</dbReference>
<dbReference type="AGR" id="MGI:2441890"/>
<dbReference type="CTD" id="2844"/>
<dbReference type="MGI" id="MGI:2441890">
    <property type="gene designation" value="Gpr21"/>
</dbReference>
<dbReference type="VEuPathDB" id="HostDB:ENSMUSG00000053164"/>
<dbReference type="eggNOG" id="KOG3656">
    <property type="taxonomic scope" value="Eukaryota"/>
</dbReference>
<dbReference type="GeneTree" id="ENSGT00940000163543"/>
<dbReference type="HOGENOM" id="CLU_009579_3_3_1"/>
<dbReference type="InParanoid" id="Q8BX79"/>
<dbReference type="OMA" id="WCAESWR"/>
<dbReference type="OrthoDB" id="6376512at2759"/>
<dbReference type="PhylomeDB" id="Q8BX79"/>
<dbReference type="TreeFam" id="TF332372"/>
<dbReference type="BioGRID-ORCS" id="338346">
    <property type="hits" value="0 hits in 78 CRISPR screens"/>
</dbReference>
<dbReference type="PRO" id="PR:Q8BX79"/>
<dbReference type="Proteomes" id="UP000000589">
    <property type="component" value="Chromosome 2"/>
</dbReference>
<dbReference type="RNAct" id="Q8BX79">
    <property type="molecule type" value="protein"/>
</dbReference>
<dbReference type="Bgee" id="ENSMUSG00000053164">
    <property type="expression patterns" value="Expressed in cortical plate and 58 other cell types or tissues"/>
</dbReference>
<dbReference type="GO" id="GO:0005886">
    <property type="term" value="C:plasma membrane"/>
    <property type="evidence" value="ECO:0007669"/>
    <property type="project" value="UniProtKB-SubCell"/>
</dbReference>
<dbReference type="GO" id="GO:0004930">
    <property type="term" value="F:G protein-coupled receptor activity"/>
    <property type="evidence" value="ECO:0007669"/>
    <property type="project" value="UniProtKB-KW"/>
</dbReference>
<dbReference type="GO" id="GO:0042593">
    <property type="term" value="P:glucose homeostasis"/>
    <property type="evidence" value="ECO:0000315"/>
    <property type="project" value="MGI"/>
</dbReference>
<dbReference type="GO" id="GO:0008286">
    <property type="term" value="P:insulin receptor signaling pathway"/>
    <property type="evidence" value="ECO:0000315"/>
    <property type="project" value="MGI"/>
</dbReference>
<dbReference type="GO" id="GO:0046627">
    <property type="term" value="P:negative regulation of insulin receptor signaling pathway"/>
    <property type="evidence" value="ECO:0000315"/>
    <property type="project" value="MGI"/>
</dbReference>
<dbReference type="GO" id="GO:0040018">
    <property type="term" value="P:positive regulation of multicellular organism growth"/>
    <property type="evidence" value="ECO:0000315"/>
    <property type="project" value="MGI"/>
</dbReference>
<dbReference type="CDD" id="cd00637">
    <property type="entry name" value="7tm_classA_rhodopsin-like"/>
    <property type="match status" value="1"/>
</dbReference>
<dbReference type="FunFam" id="1.20.1070.10:FF:000177">
    <property type="entry name" value="probable G-protein coupled receptor 52"/>
    <property type="match status" value="1"/>
</dbReference>
<dbReference type="Gene3D" id="1.20.1070.10">
    <property type="entry name" value="Rhodopsin 7-helix transmembrane proteins"/>
    <property type="match status" value="1"/>
</dbReference>
<dbReference type="InterPro" id="IPR050125">
    <property type="entry name" value="GPCR_opsins"/>
</dbReference>
<dbReference type="InterPro" id="IPR000276">
    <property type="entry name" value="GPCR_Rhodpsn"/>
</dbReference>
<dbReference type="InterPro" id="IPR017452">
    <property type="entry name" value="GPCR_Rhodpsn_7TM"/>
</dbReference>
<dbReference type="PANTHER" id="PTHR24240">
    <property type="entry name" value="OPSIN"/>
    <property type="match status" value="1"/>
</dbReference>
<dbReference type="Pfam" id="PF00001">
    <property type="entry name" value="7tm_1"/>
    <property type="match status" value="1"/>
</dbReference>
<dbReference type="PRINTS" id="PR00237">
    <property type="entry name" value="GPCRRHODOPSN"/>
</dbReference>
<dbReference type="SUPFAM" id="SSF81321">
    <property type="entry name" value="Family A G protein-coupled receptor-like"/>
    <property type="match status" value="1"/>
</dbReference>
<dbReference type="PROSITE" id="PS00237">
    <property type="entry name" value="G_PROTEIN_RECEP_F1_1"/>
    <property type="match status" value="1"/>
</dbReference>
<dbReference type="PROSITE" id="PS50262">
    <property type="entry name" value="G_PROTEIN_RECEP_F1_2"/>
    <property type="match status" value="1"/>
</dbReference>
<accession>Q8BX79</accession>
<accession>Q80T46</accession>
<protein>
    <recommendedName>
        <fullName>Probable G-protein coupled receptor 21</fullName>
    </recommendedName>
</protein>